<name>RNFE_SHEB9</name>
<protein>
    <recommendedName>
        <fullName evidence="1">Ion-translocating oxidoreductase complex subunit E</fullName>
        <ecNumber evidence="1">7.-.-.-</ecNumber>
    </recommendedName>
    <alternativeName>
        <fullName evidence="1">Rnf electron transport complex subunit E</fullName>
    </alternativeName>
</protein>
<gene>
    <name evidence="1" type="primary">rnfE</name>
    <name type="ordered locus">Sbal195_2107</name>
</gene>
<keyword id="KW-0997">Cell inner membrane</keyword>
<keyword id="KW-1003">Cell membrane</keyword>
<keyword id="KW-0249">Electron transport</keyword>
<keyword id="KW-0472">Membrane</keyword>
<keyword id="KW-1278">Translocase</keyword>
<keyword id="KW-0812">Transmembrane</keyword>
<keyword id="KW-1133">Transmembrane helix</keyword>
<keyword id="KW-0813">Transport</keyword>
<reference key="1">
    <citation type="submission" date="2007-11" db="EMBL/GenBank/DDBJ databases">
        <title>Complete sequence of chromosome of Shewanella baltica OS195.</title>
        <authorList>
            <consortium name="US DOE Joint Genome Institute"/>
            <person name="Copeland A."/>
            <person name="Lucas S."/>
            <person name="Lapidus A."/>
            <person name="Barry K."/>
            <person name="Glavina del Rio T."/>
            <person name="Dalin E."/>
            <person name="Tice H."/>
            <person name="Pitluck S."/>
            <person name="Chain P."/>
            <person name="Malfatti S."/>
            <person name="Shin M."/>
            <person name="Vergez L."/>
            <person name="Schmutz J."/>
            <person name="Larimer F."/>
            <person name="Land M."/>
            <person name="Hauser L."/>
            <person name="Kyrpides N."/>
            <person name="Kim E."/>
            <person name="Brettar I."/>
            <person name="Rodrigues J."/>
            <person name="Konstantinidis K."/>
            <person name="Klappenbach J."/>
            <person name="Hofle M."/>
            <person name="Tiedje J."/>
            <person name="Richardson P."/>
        </authorList>
    </citation>
    <scope>NUCLEOTIDE SEQUENCE [LARGE SCALE GENOMIC DNA]</scope>
    <source>
        <strain>OS195</strain>
    </source>
</reference>
<sequence length="232" mass="25029">MTNYREIAWQGLWKNNPGLVQLLGLCPLLAVTATITNALGLGLATMLVLIGSNILVSLVRDYVPKEIRIPVFVMIIAALVTTVQLLINAYAYGLYLSLGIFLPLIVTNCIIIGRAEAFASRNNAFSAAFDGLMMGLGFTLVLTVLGATREILGQGTLFDGADQLLGPWAKSLTIHLWQVDTPFLLAMLPPGAFIVMGLLIALKNVIDKKVKERQPQVAAEPSVTRARITKVG</sequence>
<evidence type="ECO:0000255" key="1">
    <source>
        <dbReference type="HAMAP-Rule" id="MF_00478"/>
    </source>
</evidence>
<dbReference type="EC" id="7.-.-.-" evidence="1"/>
<dbReference type="EMBL" id="CP000891">
    <property type="protein sequence ID" value="ABX49276.1"/>
    <property type="molecule type" value="Genomic_DNA"/>
</dbReference>
<dbReference type="RefSeq" id="WP_006081538.1">
    <property type="nucleotide sequence ID" value="NC_009997.1"/>
</dbReference>
<dbReference type="SMR" id="A9L0J6"/>
<dbReference type="KEGG" id="sbn:Sbal195_2107"/>
<dbReference type="HOGENOM" id="CLU_046659_1_0_6"/>
<dbReference type="Proteomes" id="UP000000770">
    <property type="component" value="Chromosome"/>
</dbReference>
<dbReference type="GO" id="GO:0005886">
    <property type="term" value="C:plasma membrane"/>
    <property type="evidence" value="ECO:0007669"/>
    <property type="project" value="UniProtKB-SubCell"/>
</dbReference>
<dbReference type="GO" id="GO:0022900">
    <property type="term" value="P:electron transport chain"/>
    <property type="evidence" value="ECO:0007669"/>
    <property type="project" value="UniProtKB-UniRule"/>
</dbReference>
<dbReference type="HAMAP" id="MF_00478">
    <property type="entry name" value="RsxE_RnfE"/>
    <property type="match status" value="1"/>
</dbReference>
<dbReference type="InterPro" id="IPR003667">
    <property type="entry name" value="NqrDE/RnfAE"/>
</dbReference>
<dbReference type="InterPro" id="IPR010968">
    <property type="entry name" value="RnfE"/>
</dbReference>
<dbReference type="NCBIfam" id="NF009070">
    <property type="entry name" value="PRK12405.1"/>
    <property type="match status" value="1"/>
</dbReference>
<dbReference type="NCBIfam" id="TIGR01948">
    <property type="entry name" value="rnfE"/>
    <property type="match status" value="1"/>
</dbReference>
<dbReference type="PANTHER" id="PTHR30586">
    <property type="entry name" value="ELECTRON TRANSPORT COMPLEX PROTEIN RNFE"/>
    <property type="match status" value="1"/>
</dbReference>
<dbReference type="PANTHER" id="PTHR30586:SF0">
    <property type="entry name" value="ION-TRANSLOCATING OXIDOREDUCTASE COMPLEX SUBUNIT E"/>
    <property type="match status" value="1"/>
</dbReference>
<dbReference type="Pfam" id="PF02508">
    <property type="entry name" value="Rnf-Nqr"/>
    <property type="match status" value="1"/>
</dbReference>
<dbReference type="PIRSF" id="PIRSF006102">
    <property type="entry name" value="NQR_DE"/>
    <property type="match status" value="1"/>
</dbReference>
<accession>A9L0J6</accession>
<comment type="function">
    <text evidence="1">Part of a membrane-bound complex that couples electron transfer with translocation of ions across the membrane.</text>
</comment>
<comment type="subunit">
    <text evidence="1">The complex is composed of six subunits: RnfA, RnfB, RnfC, RnfD, RnfE and RnfG.</text>
</comment>
<comment type="subcellular location">
    <subcellularLocation>
        <location evidence="1">Cell inner membrane</location>
        <topology evidence="1">Multi-pass membrane protein</topology>
    </subcellularLocation>
</comment>
<comment type="similarity">
    <text evidence="1">Belongs to the NqrDE/RnfAE family.</text>
</comment>
<organism>
    <name type="scientific">Shewanella baltica (strain OS195)</name>
    <dbReference type="NCBI Taxonomy" id="399599"/>
    <lineage>
        <taxon>Bacteria</taxon>
        <taxon>Pseudomonadati</taxon>
        <taxon>Pseudomonadota</taxon>
        <taxon>Gammaproteobacteria</taxon>
        <taxon>Alteromonadales</taxon>
        <taxon>Shewanellaceae</taxon>
        <taxon>Shewanella</taxon>
    </lineage>
</organism>
<feature type="chain" id="PRO_1000081265" description="Ion-translocating oxidoreductase complex subunit E">
    <location>
        <begin position="1"/>
        <end position="232"/>
    </location>
</feature>
<feature type="transmembrane region" description="Helical" evidence="1">
    <location>
        <begin position="18"/>
        <end position="38"/>
    </location>
</feature>
<feature type="transmembrane region" description="Helical" evidence="1">
    <location>
        <begin position="39"/>
        <end position="59"/>
    </location>
</feature>
<feature type="transmembrane region" description="Helical" evidence="1">
    <location>
        <begin position="69"/>
        <end position="89"/>
    </location>
</feature>
<feature type="transmembrane region" description="Helical" evidence="1">
    <location>
        <begin position="93"/>
        <end position="113"/>
    </location>
</feature>
<feature type="transmembrane region" description="Helical" evidence="1">
    <location>
        <begin position="127"/>
        <end position="147"/>
    </location>
</feature>
<feature type="transmembrane region" description="Helical" evidence="1">
    <location>
        <begin position="182"/>
        <end position="202"/>
    </location>
</feature>
<proteinExistence type="inferred from homology"/>